<reference key="1">
    <citation type="journal article" date="2009" name="PLoS Biol.">
        <title>Lineage-specific biology revealed by a finished genome assembly of the mouse.</title>
        <authorList>
            <person name="Church D.M."/>
            <person name="Goodstadt L."/>
            <person name="Hillier L.W."/>
            <person name="Zody M.C."/>
            <person name="Goldstein S."/>
            <person name="She X."/>
            <person name="Bult C.J."/>
            <person name="Agarwala R."/>
            <person name="Cherry J.L."/>
            <person name="DiCuccio M."/>
            <person name="Hlavina W."/>
            <person name="Kapustin Y."/>
            <person name="Meric P."/>
            <person name="Maglott D."/>
            <person name="Birtle Z."/>
            <person name="Marques A.C."/>
            <person name="Graves T."/>
            <person name="Zhou S."/>
            <person name="Teague B."/>
            <person name="Potamousis K."/>
            <person name="Churas C."/>
            <person name="Place M."/>
            <person name="Herschleb J."/>
            <person name="Runnheim R."/>
            <person name="Forrest D."/>
            <person name="Amos-Landgraf J."/>
            <person name="Schwartz D.C."/>
            <person name="Cheng Z."/>
            <person name="Lindblad-Toh K."/>
            <person name="Eichler E.E."/>
            <person name="Ponting C.P."/>
        </authorList>
    </citation>
    <scope>NUCLEOTIDE SEQUENCE [LARGE SCALE GENOMIC DNA]</scope>
    <source>
        <strain>C57BL/6J</strain>
    </source>
</reference>
<reference key="2">
    <citation type="journal article" date="2002" name="DNA Res.">
        <title>Prediction of the coding sequences of mouse homologues of KIAA gene: I. The complete nucleotide sequences of 100 mouse KIAA-homologous cDNAs identified by screening of terminal sequences of cDNA clones randomly sampled from size-fractionated libraries.</title>
        <authorList>
            <person name="Okazaki N."/>
            <person name="Kikuno R."/>
            <person name="Ohara R."/>
            <person name="Inamoto S."/>
            <person name="Hara Y."/>
            <person name="Nagase T."/>
            <person name="Ohara O."/>
            <person name="Koga H."/>
        </authorList>
    </citation>
    <scope>NUCLEOTIDE SEQUENCE [LARGE SCALE MRNA] OF 370-1687</scope>
    <source>
        <tissue>Brain</tissue>
    </source>
</reference>
<reference key="3">
    <citation type="journal article" date="2004" name="Genome Res.">
        <title>The status, quality, and expansion of the NIH full-length cDNA project: the Mammalian Gene Collection (MGC).</title>
        <authorList>
            <consortium name="The MGC Project Team"/>
        </authorList>
    </citation>
    <scope>NUCLEOTIDE SEQUENCE [LARGE SCALE MRNA] OF 424-1687</scope>
    <source>
        <strain>C57BL/6J</strain>
        <strain>Czech II</strain>
        <strain>FVB/N</strain>
        <tissue>Brain</tissue>
        <tissue>Mammary tumor</tissue>
    </source>
</reference>
<reference key="4">
    <citation type="journal article" date="2004" name="Ann. N. Y. Acad. Sci.">
        <title>Changes in expression of the mouse homologues of KIAA genes after subchronic methamphetamine treatment.</title>
        <authorList>
            <person name="Yamamoto H."/>
            <person name="Imai K."/>
            <person name="Takamatsu Y."/>
            <person name="Kamegaya E."/>
            <person name="Hara Y."/>
            <person name="Shimada K."/>
            <person name="Yamamoto T."/>
            <person name="Shen H.W."/>
            <person name="Hagino Y."/>
            <person name="Kobayashi H."/>
            <person name="Ide S."/>
            <person name="Sora I."/>
            <person name="Koga H."/>
            <person name="Ikedaa K."/>
        </authorList>
    </citation>
    <scope>INDUCTION</scope>
</reference>
<reference key="5">
    <citation type="journal article" date="2007" name="Cell">
        <title>Proteolytic degradation of SCOP in the hippocampus contributes to activation of MAP kinase and memory.</title>
        <authorList>
            <person name="Shimizu K."/>
            <person name="Phan T."/>
            <person name="Mansuy I.M."/>
            <person name="Storm D.R."/>
        </authorList>
    </citation>
    <scope>FUNCTION</scope>
</reference>
<reference key="6">
    <citation type="journal article" date="2010" name="Cell">
        <title>A tissue-specific atlas of mouse protein phosphorylation and expression.</title>
        <authorList>
            <person name="Huttlin E.L."/>
            <person name="Jedrychowski M.P."/>
            <person name="Elias J.E."/>
            <person name="Goswami T."/>
            <person name="Rad R."/>
            <person name="Beausoleil S.A."/>
            <person name="Villen J."/>
            <person name="Haas W."/>
            <person name="Sowa M.E."/>
            <person name="Gygi S.P."/>
        </authorList>
    </citation>
    <scope>IDENTIFICATION BY MASS SPECTROMETRY [LARGE SCALE ANALYSIS]</scope>
    <source>
        <tissue>Brain</tissue>
        <tissue>Lung</tissue>
        <tissue>Testis</tissue>
    </source>
</reference>
<reference key="7">
    <citation type="journal article" date="2010" name="J. Neurochem.">
        <title>Serine/threonine kinase akt activation regulates the activity of retinal serine/threonine phosphatases, PHLPP and PHLPPL.</title>
        <authorList>
            <person name="Kanan Y."/>
            <person name="Matsumoto H."/>
            <person name="Song H."/>
            <person name="Sokolov M."/>
            <person name="Anderson R.E."/>
            <person name="Rajala R.V."/>
        </authorList>
    </citation>
    <scope>ALTERNATIVE SPLICING</scope>
    <scope>TISSUE SPECIFICITY (ISOFORMS 1 AND 2)</scope>
</reference>
<reference key="8">
    <citation type="journal article" date="2010" name="Proc. Natl. Acad. Sci. U.S.A.">
        <title>Protein phosphatase PHLPP1 controls the light-induced resetting of the circadian clock.</title>
        <authorList>
            <person name="Masubuchi S."/>
            <person name="Gao T."/>
            <person name="O'Neill A."/>
            <person name="Eckel-Mahan K."/>
            <person name="Newton A.C."/>
            <person name="Sassone-Corsi P."/>
        </authorList>
    </citation>
    <scope>FUNCTION</scope>
</reference>
<reference key="9">
    <citation type="journal article" date="2011" name="J. Immunol.">
        <title>PHLPP regulates the development, function, and molecular signaling pathways of regulatory T cells.</title>
        <authorList>
            <person name="Patterson S.J."/>
            <person name="Han J.M."/>
            <person name="Garcia R."/>
            <person name="Assi K."/>
            <person name="Gao T."/>
            <person name="O'Neill A."/>
            <person name="Newton A.C."/>
            <person name="Levings M.K."/>
        </authorList>
    </citation>
    <scope>FUNCTION</scope>
</reference>
<gene>
    <name type="primary">Phlpp1</name>
    <name type="synonym">Kiaa0606</name>
    <name type="synonym">Phlpp</name>
    <name type="synonym">Plekhe1</name>
    <name type="synonym">Scop</name>
</gene>
<name>PHLP1_MOUSE</name>
<evidence type="ECO:0000250" key="1"/>
<evidence type="ECO:0000250" key="2">
    <source>
        <dbReference type="UniProtKB" id="O60346"/>
    </source>
</evidence>
<evidence type="ECO:0000250" key="3">
    <source>
        <dbReference type="UniProtKB" id="P35813"/>
    </source>
</evidence>
<evidence type="ECO:0000250" key="4">
    <source>
        <dbReference type="UniProtKB" id="Q9WTR8"/>
    </source>
</evidence>
<evidence type="ECO:0000255" key="5">
    <source>
        <dbReference type="PROSITE-ProRule" id="PRU00145"/>
    </source>
</evidence>
<evidence type="ECO:0000255" key="6">
    <source>
        <dbReference type="PROSITE-ProRule" id="PRU01082"/>
    </source>
</evidence>
<evidence type="ECO:0000256" key="7">
    <source>
        <dbReference type="SAM" id="MobiDB-lite"/>
    </source>
</evidence>
<evidence type="ECO:0000269" key="8">
    <source>
    </source>
</evidence>
<evidence type="ECO:0000269" key="9">
    <source>
    </source>
</evidence>
<evidence type="ECO:0000269" key="10">
    <source>
    </source>
</evidence>
<evidence type="ECO:0000269" key="11">
    <source>
    </source>
</evidence>
<evidence type="ECO:0000269" key="12">
    <source>
    </source>
</evidence>
<evidence type="ECO:0000305" key="13"/>
<keyword id="KW-0007">Acetylation</keyword>
<keyword id="KW-0025">Alternative splicing</keyword>
<keyword id="KW-0053">Apoptosis</keyword>
<keyword id="KW-0963">Cytoplasm</keyword>
<keyword id="KW-0378">Hydrolase</keyword>
<keyword id="KW-0433">Leucine-rich repeat</keyword>
<keyword id="KW-0464">Manganese</keyword>
<keyword id="KW-0472">Membrane</keyword>
<keyword id="KW-0479">Metal-binding</keyword>
<keyword id="KW-0539">Nucleus</keyword>
<keyword id="KW-0597">Phosphoprotein</keyword>
<keyword id="KW-0904">Protein phosphatase</keyword>
<keyword id="KW-1185">Reference proteome</keyword>
<keyword id="KW-0677">Repeat</keyword>
<proteinExistence type="evidence at protein level"/>
<organism>
    <name type="scientific">Mus musculus</name>
    <name type="common">Mouse</name>
    <dbReference type="NCBI Taxonomy" id="10090"/>
    <lineage>
        <taxon>Eukaryota</taxon>
        <taxon>Metazoa</taxon>
        <taxon>Chordata</taxon>
        <taxon>Craniata</taxon>
        <taxon>Vertebrata</taxon>
        <taxon>Euteleostomi</taxon>
        <taxon>Mammalia</taxon>
        <taxon>Eutheria</taxon>
        <taxon>Euarchontoglires</taxon>
        <taxon>Glires</taxon>
        <taxon>Rodentia</taxon>
        <taxon>Myomorpha</taxon>
        <taxon>Muroidea</taxon>
        <taxon>Muridae</taxon>
        <taxon>Murinae</taxon>
        <taxon>Mus</taxon>
        <taxon>Mus</taxon>
    </lineage>
</organism>
<accession>Q8CHE4</accession>
<accession>Q6PCN0</accession>
<accession>Q8QZU8</accession>
<accession>Q8R5E5</accession>
<accession>Q99KL6</accession>
<feature type="chain" id="PRO_0000057782" description="PH domain leucine-rich repeat-containing protein phosphatase 1">
    <location>
        <begin position="1"/>
        <end position="1687"/>
    </location>
</feature>
<feature type="domain" description="PH" evidence="5">
    <location>
        <begin position="492"/>
        <end position="592"/>
    </location>
</feature>
<feature type="repeat" description="LRR 1">
    <location>
        <begin position="594"/>
        <end position="615"/>
    </location>
</feature>
<feature type="repeat" description="LRR 2">
    <location>
        <begin position="617"/>
        <end position="638"/>
    </location>
</feature>
<feature type="repeat" description="LRR 3">
    <location>
        <begin position="648"/>
        <end position="669"/>
    </location>
</feature>
<feature type="repeat" description="LRR 4">
    <location>
        <begin position="671"/>
        <end position="692"/>
    </location>
</feature>
<feature type="repeat" description="LRR 5">
    <location>
        <begin position="694"/>
        <end position="715"/>
    </location>
</feature>
<feature type="repeat" description="LRR 6">
    <location>
        <begin position="717"/>
        <end position="739"/>
    </location>
</feature>
<feature type="repeat" description="LRR 7">
    <location>
        <begin position="740"/>
        <end position="760"/>
    </location>
</feature>
<feature type="repeat" description="LRR 8">
    <location>
        <begin position="764"/>
        <end position="785"/>
    </location>
</feature>
<feature type="repeat" description="LRR 9">
    <location>
        <begin position="788"/>
        <end position="809"/>
    </location>
</feature>
<feature type="repeat" description="LRR 10">
    <location>
        <begin position="829"/>
        <end position="850"/>
    </location>
</feature>
<feature type="repeat" description="LRR 11">
    <location>
        <begin position="851"/>
        <end position="872"/>
    </location>
</feature>
<feature type="repeat" description="LRR 12">
    <location>
        <begin position="874"/>
        <end position="895"/>
    </location>
</feature>
<feature type="repeat" description="LRR 13">
    <location>
        <begin position="897"/>
        <end position="918"/>
    </location>
</feature>
<feature type="repeat" description="LRR 14">
    <location>
        <begin position="919"/>
        <end position="940"/>
    </location>
</feature>
<feature type="repeat" description="LRR 15">
    <location>
        <begin position="943"/>
        <end position="964"/>
    </location>
</feature>
<feature type="repeat" description="LRR 16">
    <location>
        <begin position="969"/>
        <end position="989"/>
    </location>
</feature>
<feature type="repeat" description="LRR 17">
    <location>
        <begin position="993"/>
        <end position="1014"/>
    </location>
</feature>
<feature type="repeat" description="LRR 18">
    <location>
        <begin position="1017"/>
        <end position="1038"/>
    </location>
</feature>
<feature type="repeat" description="LRR 19">
    <location>
        <begin position="1040"/>
        <end position="1061"/>
    </location>
</feature>
<feature type="repeat" description="LRR 20">
    <location>
        <begin position="1062"/>
        <end position="1083"/>
    </location>
</feature>
<feature type="repeat" description="LRR 21">
    <location>
        <begin position="1085"/>
        <end position="1106"/>
    </location>
</feature>
<feature type="domain" description="PPM-type phosphatase" evidence="6">
    <location>
        <begin position="1131"/>
        <end position="1378"/>
    </location>
</feature>
<feature type="region of interest" description="Disordered" evidence="7">
    <location>
        <begin position="1"/>
        <end position="96"/>
    </location>
</feature>
<feature type="region of interest" description="Disordered" evidence="7">
    <location>
        <begin position="230"/>
        <end position="406"/>
    </location>
</feature>
<feature type="region of interest" description="Disordered" evidence="7">
    <location>
        <begin position="1414"/>
        <end position="1465"/>
    </location>
</feature>
<feature type="region of interest" description="Disordered" evidence="7">
    <location>
        <begin position="1604"/>
        <end position="1687"/>
    </location>
</feature>
<feature type="short sequence motif" description="PDZ-binding">
    <location>
        <begin position="1685"/>
        <end position="1687"/>
    </location>
</feature>
<feature type="compositionally biased region" description="Low complexity" evidence="7">
    <location>
        <begin position="78"/>
        <end position="96"/>
    </location>
</feature>
<feature type="compositionally biased region" description="Polar residues" evidence="7">
    <location>
        <begin position="314"/>
        <end position="326"/>
    </location>
</feature>
<feature type="compositionally biased region" description="Low complexity" evidence="7">
    <location>
        <begin position="1424"/>
        <end position="1445"/>
    </location>
</feature>
<feature type="compositionally biased region" description="Pro residues" evidence="7">
    <location>
        <begin position="1649"/>
        <end position="1669"/>
    </location>
</feature>
<feature type="binding site" evidence="3">
    <location>
        <position position="1166"/>
    </location>
    <ligand>
        <name>Mn(2+)</name>
        <dbReference type="ChEBI" id="CHEBI:29035"/>
        <label>1</label>
    </ligand>
</feature>
<feature type="binding site" evidence="3">
    <location>
        <position position="1166"/>
    </location>
    <ligand>
        <name>Mn(2+)</name>
        <dbReference type="ChEBI" id="CHEBI:29035"/>
        <label>2</label>
    </ligand>
</feature>
<feature type="binding site" evidence="3">
    <location>
        <position position="1167"/>
    </location>
    <ligand>
        <name>Mn(2+)</name>
        <dbReference type="ChEBI" id="CHEBI:29035"/>
        <label>1</label>
    </ligand>
</feature>
<feature type="binding site" evidence="3">
    <location>
        <position position="1330"/>
    </location>
    <ligand>
        <name>Mn(2+)</name>
        <dbReference type="ChEBI" id="CHEBI:29035"/>
        <label>2</label>
    </ligand>
</feature>
<feature type="binding site" evidence="3">
    <location>
        <position position="1369"/>
    </location>
    <ligand>
        <name>Mn(2+)</name>
        <dbReference type="ChEBI" id="CHEBI:29035"/>
        <label>2</label>
    </ligand>
</feature>
<feature type="modified residue" description="N-acetylmethionine" evidence="2">
    <location>
        <position position="1"/>
    </location>
</feature>
<feature type="modified residue" description="Phosphoserine" evidence="2">
    <location>
        <position position="286"/>
    </location>
</feature>
<feature type="modified residue" description="Phosphoserine" evidence="2">
    <location>
        <position position="372"/>
    </location>
</feature>
<feature type="splice variant" id="VSP_057810" description="In isoform 2.">
    <location>
        <begin position="1"/>
        <end position="468"/>
    </location>
</feature>
<feature type="sequence conflict" description="In Ref. 3; AAH59254." evidence="13" ref="3">
    <original>S</original>
    <variation>F</variation>
    <location>
        <position position="724"/>
    </location>
</feature>
<feature type="sequence conflict" description="In Ref. 3; AAH22703." evidence="13" ref="3">
    <original>E</original>
    <variation>K</variation>
    <location>
        <position position="1506"/>
    </location>
</feature>
<dbReference type="EC" id="3.1.3.16"/>
<dbReference type="EMBL" id="AC101663">
    <property type="status" value="NOT_ANNOTATED_CDS"/>
    <property type="molecule type" value="Genomic_DNA"/>
</dbReference>
<dbReference type="EMBL" id="AC124710">
    <property type="status" value="NOT_ANNOTATED_CDS"/>
    <property type="molecule type" value="Genomic_DNA"/>
</dbReference>
<dbReference type="EMBL" id="AC144773">
    <property type="status" value="NOT_ANNOTATED_CDS"/>
    <property type="molecule type" value="Genomic_DNA"/>
</dbReference>
<dbReference type="EMBL" id="AB093251">
    <property type="protein sequence ID" value="BAC41435.1"/>
    <property type="molecule type" value="mRNA"/>
</dbReference>
<dbReference type="EMBL" id="BC004581">
    <property type="protein sequence ID" value="AAH04581.1"/>
    <property type="molecule type" value="mRNA"/>
</dbReference>
<dbReference type="EMBL" id="BC022703">
    <property type="protein sequence ID" value="AAH22703.1"/>
    <property type="molecule type" value="mRNA"/>
</dbReference>
<dbReference type="EMBL" id="BC024670">
    <property type="protein sequence ID" value="AAH24670.1"/>
    <property type="molecule type" value="mRNA"/>
</dbReference>
<dbReference type="EMBL" id="BC059254">
    <property type="protein sequence ID" value="AAH59254.1"/>
    <property type="status" value="ALT_FRAME"/>
    <property type="molecule type" value="mRNA"/>
</dbReference>
<dbReference type="CCDS" id="CCDS48337.1">
    <molecule id="Q8CHE4-1"/>
</dbReference>
<dbReference type="RefSeq" id="NP_598582.3">
    <molecule id="Q8CHE4-1"/>
    <property type="nucleotide sequence ID" value="NM_133821.3"/>
</dbReference>
<dbReference type="SMR" id="Q8CHE4"/>
<dbReference type="BioGRID" id="221058">
    <property type="interactions" value="35"/>
</dbReference>
<dbReference type="FunCoup" id="Q8CHE4">
    <property type="interactions" value="2688"/>
</dbReference>
<dbReference type="IntAct" id="Q8CHE4">
    <property type="interactions" value="1"/>
</dbReference>
<dbReference type="STRING" id="10090.ENSMUSP00000056530"/>
<dbReference type="iPTMnet" id="Q8CHE4"/>
<dbReference type="PhosphoSitePlus" id="Q8CHE4"/>
<dbReference type="SwissPalm" id="Q8CHE4"/>
<dbReference type="PaxDb" id="10090-ENSMUSP00000056530"/>
<dbReference type="PeptideAtlas" id="Q8CHE4"/>
<dbReference type="ProteomicsDB" id="288142">
    <molecule id="Q8CHE4-1"/>
</dbReference>
<dbReference type="ProteomicsDB" id="288143">
    <molecule id="Q8CHE4-2"/>
</dbReference>
<dbReference type="Pumba" id="Q8CHE4"/>
<dbReference type="Antibodypedia" id="23071">
    <property type="antibodies" value="178 antibodies from 34 providers"/>
</dbReference>
<dbReference type="DNASU" id="98432"/>
<dbReference type="Ensembl" id="ENSMUST00000061047.7">
    <molecule id="Q8CHE4-1"/>
    <property type="protein sequence ID" value="ENSMUSP00000056530.7"/>
    <property type="gene ID" value="ENSMUSG00000044340.8"/>
</dbReference>
<dbReference type="GeneID" id="98432"/>
<dbReference type="KEGG" id="mmu:98432"/>
<dbReference type="UCSC" id="uc007cgv.2">
    <molecule id="Q8CHE4-1"/>
    <property type="organism name" value="mouse"/>
</dbReference>
<dbReference type="AGR" id="MGI:2138327"/>
<dbReference type="CTD" id="23239"/>
<dbReference type="MGI" id="MGI:2138327">
    <property type="gene designation" value="Phlpp1"/>
</dbReference>
<dbReference type="VEuPathDB" id="HostDB:ENSMUSG00000044340"/>
<dbReference type="eggNOG" id="KOG0618">
    <property type="taxonomic scope" value="Eukaryota"/>
</dbReference>
<dbReference type="GeneTree" id="ENSGT00940000158137"/>
<dbReference type="HOGENOM" id="CLU_003020_0_0_1"/>
<dbReference type="InParanoid" id="Q8CHE4"/>
<dbReference type="OMA" id="GHNQICD"/>
<dbReference type="OrthoDB" id="1394818at2759"/>
<dbReference type="PhylomeDB" id="Q8CHE4"/>
<dbReference type="TreeFam" id="TF315993"/>
<dbReference type="Reactome" id="R-MMU-199418">
    <property type="pathway name" value="Negative regulation of the PI3K/AKT network"/>
</dbReference>
<dbReference type="BioGRID-ORCS" id="98432">
    <property type="hits" value="6 hits in 78 CRISPR screens"/>
</dbReference>
<dbReference type="ChiTaRS" id="Phlpp1">
    <property type="organism name" value="mouse"/>
</dbReference>
<dbReference type="PRO" id="PR:Q8CHE4"/>
<dbReference type="Proteomes" id="UP000000589">
    <property type="component" value="Chromosome 1"/>
</dbReference>
<dbReference type="RNAct" id="Q8CHE4">
    <property type="molecule type" value="protein"/>
</dbReference>
<dbReference type="Bgee" id="ENSMUSG00000044340">
    <property type="expression patterns" value="Expressed in cerebellar nuclear complex and 246 other cell types or tissues"/>
</dbReference>
<dbReference type="GO" id="GO:0005737">
    <property type="term" value="C:cytoplasm"/>
    <property type="evidence" value="ECO:0007669"/>
    <property type="project" value="UniProtKB-SubCell"/>
</dbReference>
<dbReference type="GO" id="GO:0016020">
    <property type="term" value="C:membrane"/>
    <property type="evidence" value="ECO:0007669"/>
    <property type="project" value="UniProtKB-SubCell"/>
</dbReference>
<dbReference type="GO" id="GO:0005634">
    <property type="term" value="C:nucleus"/>
    <property type="evidence" value="ECO:0007669"/>
    <property type="project" value="UniProtKB-SubCell"/>
</dbReference>
<dbReference type="GO" id="GO:0046872">
    <property type="term" value="F:metal ion binding"/>
    <property type="evidence" value="ECO:0007669"/>
    <property type="project" value="UniProtKB-KW"/>
</dbReference>
<dbReference type="GO" id="GO:0004722">
    <property type="term" value="F:protein serine/threonine phosphatase activity"/>
    <property type="evidence" value="ECO:0007669"/>
    <property type="project" value="UniProtKB-EC"/>
</dbReference>
<dbReference type="GO" id="GO:0006915">
    <property type="term" value="P:apoptotic process"/>
    <property type="evidence" value="ECO:0007669"/>
    <property type="project" value="UniProtKB-KW"/>
</dbReference>
<dbReference type="GO" id="GO:0009649">
    <property type="term" value="P:entrainment of circadian clock"/>
    <property type="evidence" value="ECO:0000315"/>
    <property type="project" value="MGI"/>
</dbReference>
<dbReference type="GO" id="GO:0051898">
    <property type="term" value="P:negative regulation of phosphatidylinositol 3-kinase/protein kinase B signal transduction"/>
    <property type="evidence" value="ECO:0007669"/>
    <property type="project" value="Ensembl"/>
</dbReference>
<dbReference type="GO" id="GO:0042981">
    <property type="term" value="P:regulation of apoptotic process"/>
    <property type="evidence" value="ECO:0007669"/>
    <property type="project" value="Ensembl"/>
</dbReference>
<dbReference type="GO" id="GO:0046328">
    <property type="term" value="P:regulation of JNK cascade"/>
    <property type="evidence" value="ECO:0007669"/>
    <property type="project" value="Ensembl"/>
</dbReference>
<dbReference type="GO" id="GO:1900744">
    <property type="term" value="P:regulation of p38MAPK cascade"/>
    <property type="evidence" value="ECO:0007669"/>
    <property type="project" value="Ensembl"/>
</dbReference>
<dbReference type="GO" id="GO:0002667">
    <property type="term" value="P:regulation of T cell anergy"/>
    <property type="evidence" value="ECO:0000315"/>
    <property type="project" value="UniProtKB"/>
</dbReference>
<dbReference type="CDD" id="cd13322">
    <property type="entry name" value="PH_PHLPP-like"/>
    <property type="match status" value="1"/>
</dbReference>
<dbReference type="CDD" id="cd00143">
    <property type="entry name" value="PP2Cc"/>
    <property type="match status" value="1"/>
</dbReference>
<dbReference type="CDD" id="cd17240">
    <property type="entry name" value="RA_PHLPP1"/>
    <property type="match status" value="1"/>
</dbReference>
<dbReference type="FunFam" id="3.80.10.10:FF:000278">
    <property type="entry name" value="PH domain and leucine rich repeat protein phosphatase 1"/>
    <property type="match status" value="1"/>
</dbReference>
<dbReference type="FunFam" id="3.80.10.10:FF:000345">
    <property type="entry name" value="PH domain and leucine rich repeat protein phosphatase 1"/>
    <property type="match status" value="1"/>
</dbReference>
<dbReference type="FunFam" id="3.80.10.10:FF:000027">
    <property type="entry name" value="PH domain and leucine rich repeat protein phosphatase 2"/>
    <property type="match status" value="1"/>
</dbReference>
<dbReference type="FunFam" id="3.60.40.10:FF:000003">
    <property type="entry name" value="PH domain and leucine-rich repeat protein phosphatase 1"/>
    <property type="match status" value="1"/>
</dbReference>
<dbReference type="Gene3D" id="2.30.29.30">
    <property type="entry name" value="Pleckstrin-homology domain (PH domain)/Phosphotyrosine-binding domain (PTB)"/>
    <property type="match status" value="1"/>
</dbReference>
<dbReference type="Gene3D" id="3.60.40.10">
    <property type="entry name" value="PPM-type phosphatase domain"/>
    <property type="match status" value="1"/>
</dbReference>
<dbReference type="Gene3D" id="3.80.10.10">
    <property type="entry name" value="Ribonuclease Inhibitor"/>
    <property type="match status" value="3"/>
</dbReference>
<dbReference type="InterPro" id="IPR001611">
    <property type="entry name" value="Leu-rich_rpt"/>
</dbReference>
<dbReference type="InterPro" id="IPR003591">
    <property type="entry name" value="Leu-rich_rpt_typical-subtyp"/>
</dbReference>
<dbReference type="InterPro" id="IPR032675">
    <property type="entry name" value="LRR_dom_sf"/>
</dbReference>
<dbReference type="InterPro" id="IPR050216">
    <property type="entry name" value="LRR_domain-containing"/>
</dbReference>
<dbReference type="InterPro" id="IPR011993">
    <property type="entry name" value="PH-like_dom_sf"/>
</dbReference>
<dbReference type="InterPro" id="IPR001849">
    <property type="entry name" value="PH_domain"/>
</dbReference>
<dbReference type="InterPro" id="IPR036457">
    <property type="entry name" value="PPM-type-like_dom_sf"/>
</dbReference>
<dbReference type="InterPro" id="IPR001932">
    <property type="entry name" value="PPM-type_phosphatase-like_dom"/>
</dbReference>
<dbReference type="InterPro" id="IPR055071">
    <property type="entry name" value="RA_PHLPP-like"/>
</dbReference>
<dbReference type="PANTHER" id="PTHR48051">
    <property type="match status" value="1"/>
</dbReference>
<dbReference type="PANTHER" id="PTHR48051:SF54">
    <property type="entry name" value="LEUCINE-RICH REPEAT-CONTAINING PROTEIN"/>
    <property type="match status" value="1"/>
</dbReference>
<dbReference type="Pfam" id="PF00560">
    <property type="entry name" value="LRR_1"/>
    <property type="match status" value="1"/>
</dbReference>
<dbReference type="Pfam" id="PF13516">
    <property type="entry name" value="LRR_6"/>
    <property type="match status" value="1"/>
</dbReference>
<dbReference type="Pfam" id="PF13855">
    <property type="entry name" value="LRR_8"/>
    <property type="match status" value="2"/>
</dbReference>
<dbReference type="Pfam" id="PF00169">
    <property type="entry name" value="PH"/>
    <property type="match status" value="1"/>
</dbReference>
<dbReference type="Pfam" id="PF00481">
    <property type="entry name" value="PP2C"/>
    <property type="match status" value="1"/>
</dbReference>
<dbReference type="Pfam" id="PF23010">
    <property type="entry name" value="RA_3"/>
    <property type="match status" value="1"/>
</dbReference>
<dbReference type="SMART" id="SM00364">
    <property type="entry name" value="LRR_BAC"/>
    <property type="match status" value="11"/>
</dbReference>
<dbReference type="SMART" id="SM00369">
    <property type="entry name" value="LRR_TYP"/>
    <property type="match status" value="9"/>
</dbReference>
<dbReference type="SMART" id="SM00332">
    <property type="entry name" value="PP2Cc"/>
    <property type="match status" value="1"/>
</dbReference>
<dbReference type="SUPFAM" id="SSF52058">
    <property type="entry name" value="L domain-like"/>
    <property type="match status" value="1"/>
</dbReference>
<dbReference type="SUPFAM" id="SSF50729">
    <property type="entry name" value="PH domain-like"/>
    <property type="match status" value="1"/>
</dbReference>
<dbReference type="SUPFAM" id="SSF81606">
    <property type="entry name" value="PP2C-like"/>
    <property type="match status" value="1"/>
</dbReference>
<dbReference type="SUPFAM" id="SSF52047">
    <property type="entry name" value="RNI-like"/>
    <property type="match status" value="1"/>
</dbReference>
<dbReference type="PROSITE" id="PS51450">
    <property type="entry name" value="LRR"/>
    <property type="match status" value="17"/>
</dbReference>
<dbReference type="PROSITE" id="PS50003">
    <property type="entry name" value="PH_DOMAIN"/>
    <property type="match status" value="1"/>
</dbReference>
<dbReference type="PROSITE" id="PS51746">
    <property type="entry name" value="PPM_2"/>
    <property type="match status" value="1"/>
</dbReference>
<sequence length="1687" mass="182367">MEPAAAAPAQRLADPTGEDQALAAAAAEGGRCPDPALSAAAPSGGNGGAAREEAPCEAPPGPLPGRAGGTGRRRRRGAPQPAAGGAAPVPAAGGGANSLLLKRGRLKRNLSAAAAASSSSSPSSASSAAGGLPASCSASASLCTRSLDRKTLLLKHRQLLQLQPSDRDWVRHQLQRGCVHVFDRHMASSYLRPVLCTLDTTAAEVAARLLQLGHKGGGVVKVLGYGPPPAAAPAASDQTLDGEHGRDVEPPPSSGTVGAVRGPARAPPADLPLPGGAWTRCAPRISPAPSDSSPGELFAGGPGSPPRAPRPASDTESFSLSPSAESVSDRLDPYSSGGGGSSSSSEELEADPAMPHRPGRPAQPRPPSPKTSALLQPKAPTGVDSTGVIAGEGPGDDKAMAAAAPDVPLSTSGRIRETVQKTSPPSLYVQLHGETTRRLEADEKPLQIQNDYLFQLGFGELWRVQEEGMDSEIGCLIRFYAGKPHSTGSSERIQLSGMYNVRKGKMQLPVNRWTRRQVILCGTCLIVSSVKDSVSGKMHVLPLIGGKVEEVKKHQHCLAFSSSGPQSQTYYICFDTFTEYLRWLRQVSKVASQRISSVDLSCCSLEHLPANLFYSQDLTHLNLKQNFLRQTPTLPAARGLGELQRFTKLKSLNLSNNHLGAFPSAVCSIPTLAELNVSCNALREVPAAVGDMQNLQTFLLDGNFLQSLPAELESMHQLSYLGLSFNEFTDIPEVLEKLTAVDKLCMAGNCVETLRLQALRRMPHIKHVDLRLNILRKLMADEVDFVQHVTQLDLRDNKLGDLDAMIFNNIEVLHCERNQLVTLNVCGYFLKALYASSNELAQLDVYPVPNYLSYMDVSRNCLESVPEWVCESRKLEVLDIGHNQICELPARLFCNSSLRKLLAGHNRLARLPERLERTSVEVLDVQHNQITELPPNLLMKADSLRFLNASANKLETLPPATLSEETSSILQELYLTNNCLTDKCVPLLTGHPRLKILHMAYNRLQSFPASKMAKLEELEEIDISGNKLKAIPTTIMNCRRMHTVIAHSNCIEVFPEVMQLPEVKCVDLSCNELSEITLPENLPPKLQELDLTGNPRLALDHKSLELLNNIRCFKIDQPSAGDASGAPAVWSHGYTEASGVKNKLCVAALSVNNFRDNREALYGVFDGDRNVEVPYLLQCTMSDILAEELQKTKNEEEYMVNTFIVMQRKLGTAGQKLGGAAVLCHIKPDPVDLGGSFTLTSANVGKCQTVLCRNGKPLSLSRSYIMSCEEERKRIKQHKAIITEDGKVNGVTESTRILGYTFLHPSVVPRPHVQSVLLTPQDEFFILGSKGLWDSLSIDEAVEAVRNVPDALAAAKKLCTLAQSYGCHDSISAVVVQLSVTEDSFCCCELSAGGSMPPPSPGIFPPSVNMVIKDRPSDGLGVPSSSSGMASEISSELSTSEMSSEVGSTASDEPPSGVLNESSPAYPNEQRCMLHPVCLSNSFQRQLSSATFSSAFSDNGLDSDDEEPIEGVFSNGSRVEVEVDIHCSRAKEKERQQHLLQVPAEASDEGIVISANEDESGLSKKADFSAVGTIGRRRANGSVAPQERSHNVIEVAADAPLRKPGGYFAAPAQPDPDDQFIIPPELEEEVKEIMKHHQEQQQQQQQQQLPPPPQPPQPQPQPQPQPQPQPQRHFQMDHLPDCYDTPL</sequence>
<comment type="function">
    <text evidence="2 4 9 10 12">Protein phosphatase involved in regulation of Akt and PKC signaling. Mediates dephosphorylation in the C-terminal domain hydrophobic motif of members of the AGC Ser/Thr protein kinase family; specifically acts on 'Ser-473' of AKT2 and AKT3, 'Ser-660' of PRKCB and 'Ser-657' of PRKCA (By similarity). Isoform 2 seems to have a major role in regulating Akt signaling in hippocampal neurons (By similarity). Akt regulates the balance between cell survival and apoptosis through a cascade that primarily alters the function of transcription factors that regulate pro- and antiapoptotic genes. Dephosphorylation of 'Ser-473' of Akt triggers apoptosis and suppression of tumor growth. Dephosphorylation of PRKCA and PRKCB leads to their destabilization and degradation. Dephosphorylates STK4 on 'Thr-387' leading to STK4 activation and apoptosis. Dephosphorylates RPS6KB1 and is involved in regulation of cap-dependent translation. Inhibits cancer cell proliferation and may act as a tumor suppressor. Dephosphorylates RAF1 inhibiting its kinase activity. May act as a negative regulator of K-Ras signaling in membrane rafts (By similarity). Involved in the hippocampus-dependent long-term memory formation (PubMed:17382888). Involved in circadian control by regulating the consolidation of circadian periodicity after resetting (PubMed:20080691). Involved in development and function of regulatory T-cells (PubMed:21498666).</text>
</comment>
<comment type="catalytic activity">
    <reaction>
        <text>O-phospho-L-seryl-[protein] + H2O = L-seryl-[protein] + phosphate</text>
        <dbReference type="Rhea" id="RHEA:20629"/>
        <dbReference type="Rhea" id="RHEA-COMP:9863"/>
        <dbReference type="Rhea" id="RHEA-COMP:11604"/>
        <dbReference type="ChEBI" id="CHEBI:15377"/>
        <dbReference type="ChEBI" id="CHEBI:29999"/>
        <dbReference type="ChEBI" id="CHEBI:43474"/>
        <dbReference type="ChEBI" id="CHEBI:83421"/>
        <dbReference type="EC" id="3.1.3.16"/>
    </reaction>
</comment>
<comment type="catalytic activity">
    <reaction>
        <text>O-phospho-L-threonyl-[protein] + H2O = L-threonyl-[protein] + phosphate</text>
        <dbReference type="Rhea" id="RHEA:47004"/>
        <dbReference type="Rhea" id="RHEA-COMP:11060"/>
        <dbReference type="Rhea" id="RHEA-COMP:11605"/>
        <dbReference type="ChEBI" id="CHEBI:15377"/>
        <dbReference type="ChEBI" id="CHEBI:30013"/>
        <dbReference type="ChEBI" id="CHEBI:43474"/>
        <dbReference type="ChEBI" id="CHEBI:61977"/>
        <dbReference type="EC" id="3.1.3.16"/>
    </reaction>
</comment>
<comment type="cofactor">
    <cofactor evidence="1">
        <name>Mn(2+)</name>
        <dbReference type="ChEBI" id="CHEBI:29035"/>
    </cofactor>
    <text evidence="1">Binds 2 manganese ions per subunit.</text>
</comment>
<comment type="activity regulation">
    <text evidence="2">Insensitive to okadaic acid. Deubiquitination by WDR48-USP12 complex positively regulates PHLPP1 stability.</text>
</comment>
<comment type="subunit">
    <text evidence="2 4">Interacts with the nucleotide free form of K-Ras (KRAS) via its LRR repeats (By similarity). Interacts with AKT2, AKT3 and PRKCB. Interacts with WDR48 and USP12 (By similarity).</text>
</comment>
<comment type="subcellular location">
    <subcellularLocation>
        <location>Cytoplasm</location>
    </subcellularLocation>
    <subcellularLocation>
        <location>Membrane</location>
        <topology>Peripheral membrane protein</topology>
    </subcellularLocation>
    <subcellularLocation>
        <location evidence="1">Nucleus</location>
    </subcellularLocation>
</comment>
<comment type="alternative products">
    <event type="alternative splicing"/>
    <isoform>
        <id>Q8CHE4-1</id>
        <name>1</name>
        <name>beta</name>
        <sequence type="displayed"/>
    </isoform>
    <isoform>
        <id>Q8CHE4-2</id>
        <name>2</name>
        <name>alpha</name>
        <sequence type="described" ref="VSP_057810"/>
    </isoform>
</comment>
<comment type="tissue specificity">
    <text evidence="11">Isoforms 1 and 2 are expressed in the retina (PubMed:20089132).</text>
</comment>
<comment type="induction">
    <text evidence="8">Up-regulated in the hippocampus upon chronic methamphetamine treatment.</text>
</comment>
<comment type="domain">
    <text evidence="1">The PH domain is required for interaction with PRKCB and its dephosphorylation.</text>
</comment>
<comment type="sequence caution" evidence="13">
    <conflict type="frameshift">
        <sequence resource="EMBL-CDS" id="AAH59254"/>
    </conflict>
</comment>
<protein>
    <recommendedName>
        <fullName>PH domain leucine-rich repeat-containing protein phosphatase 1</fullName>
        <ecNumber>3.1.3.16</ecNumber>
    </recommendedName>
    <alternativeName>
        <fullName>Pleckstrin homology domain-containing family E member 1</fullName>
        <shortName>PH domain-containing family E member 1</shortName>
    </alternativeName>
    <alternativeName>
        <fullName>Suprachiasmatic nucleus circadian oscillatory protein</fullName>
    </alternativeName>
</protein>